<geneLocation type="chloroplast"/>
<organism>
    <name type="scientific">Coffea arabica</name>
    <name type="common">Arabian coffee</name>
    <dbReference type="NCBI Taxonomy" id="13443"/>
    <lineage>
        <taxon>Eukaryota</taxon>
        <taxon>Viridiplantae</taxon>
        <taxon>Streptophyta</taxon>
        <taxon>Embryophyta</taxon>
        <taxon>Tracheophyta</taxon>
        <taxon>Spermatophyta</taxon>
        <taxon>Magnoliopsida</taxon>
        <taxon>eudicotyledons</taxon>
        <taxon>Gunneridae</taxon>
        <taxon>Pentapetalae</taxon>
        <taxon>asterids</taxon>
        <taxon>lamiids</taxon>
        <taxon>Gentianales</taxon>
        <taxon>Rubiaceae</taxon>
        <taxon>Ixoroideae</taxon>
        <taxon>Gardenieae complex</taxon>
        <taxon>Bertiereae - Coffeeae clade</taxon>
        <taxon>Coffeeae</taxon>
        <taxon>Coffea</taxon>
    </lineage>
</organism>
<name>RR4_COFAR</name>
<reference key="1">
    <citation type="journal article" date="2007" name="Plant Biotechnol. J.">
        <title>The complete nucleotide sequence of the coffee (Coffea arabica L.) chloroplast genome: organization and implications for biotechnology and phylogenetic relationships amongst angiosperms.</title>
        <authorList>
            <person name="Samson N."/>
            <person name="Bausher M.G."/>
            <person name="Lee S.-B."/>
            <person name="Jansen R.K."/>
            <person name="Daniell H."/>
        </authorList>
    </citation>
    <scope>NUCLEOTIDE SEQUENCE [LARGE SCALE GENOMIC DNA]</scope>
</reference>
<dbReference type="EMBL" id="EF044213">
    <property type="protein sequence ID" value="ABJ89681.1"/>
    <property type="molecule type" value="Genomic_DNA"/>
</dbReference>
<dbReference type="RefSeq" id="YP_817484.1">
    <property type="nucleotide sequence ID" value="NC_008535.1"/>
</dbReference>
<dbReference type="SMR" id="A0A337"/>
<dbReference type="GeneID" id="4421827"/>
<dbReference type="OrthoDB" id="2443at2759"/>
<dbReference type="Proteomes" id="UP000515148">
    <property type="component" value="Chloroplast Pltd"/>
</dbReference>
<dbReference type="GO" id="GO:0009507">
    <property type="term" value="C:chloroplast"/>
    <property type="evidence" value="ECO:0007669"/>
    <property type="project" value="UniProtKB-SubCell"/>
</dbReference>
<dbReference type="GO" id="GO:0015935">
    <property type="term" value="C:small ribosomal subunit"/>
    <property type="evidence" value="ECO:0007669"/>
    <property type="project" value="InterPro"/>
</dbReference>
<dbReference type="GO" id="GO:0019843">
    <property type="term" value="F:rRNA binding"/>
    <property type="evidence" value="ECO:0007669"/>
    <property type="project" value="UniProtKB-UniRule"/>
</dbReference>
<dbReference type="GO" id="GO:0003735">
    <property type="term" value="F:structural constituent of ribosome"/>
    <property type="evidence" value="ECO:0007669"/>
    <property type="project" value="InterPro"/>
</dbReference>
<dbReference type="GO" id="GO:0042274">
    <property type="term" value="P:ribosomal small subunit biogenesis"/>
    <property type="evidence" value="ECO:0007669"/>
    <property type="project" value="TreeGrafter"/>
</dbReference>
<dbReference type="GO" id="GO:0006412">
    <property type="term" value="P:translation"/>
    <property type="evidence" value="ECO:0007669"/>
    <property type="project" value="UniProtKB-UniRule"/>
</dbReference>
<dbReference type="CDD" id="cd00165">
    <property type="entry name" value="S4"/>
    <property type="match status" value="1"/>
</dbReference>
<dbReference type="FunFam" id="1.10.1050.10:FF:000002">
    <property type="entry name" value="30S ribosomal protein S4, chloroplastic"/>
    <property type="match status" value="1"/>
</dbReference>
<dbReference type="FunFam" id="3.10.290.10:FF:000081">
    <property type="entry name" value="30S ribosomal protein S4, chloroplastic"/>
    <property type="match status" value="1"/>
</dbReference>
<dbReference type="Gene3D" id="1.10.1050.10">
    <property type="entry name" value="Ribosomal Protein S4 Delta 41, Chain A, domain 1"/>
    <property type="match status" value="1"/>
</dbReference>
<dbReference type="Gene3D" id="3.10.290.10">
    <property type="entry name" value="RNA-binding S4 domain"/>
    <property type="match status" value="1"/>
</dbReference>
<dbReference type="HAMAP" id="MF_01306_B">
    <property type="entry name" value="Ribosomal_uS4_B"/>
    <property type="match status" value="1"/>
</dbReference>
<dbReference type="InterPro" id="IPR022801">
    <property type="entry name" value="Ribosomal_uS4"/>
</dbReference>
<dbReference type="InterPro" id="IPR005709">
    <property type="entry name" value="Ribosomal_uS4_bac-type"/>
</dbReference>
<dbReference type="InterPro" id="IPR018079">
    <property type="entry name" value="Ribosomal_uS4_CS"/>
</dbReference>
<dbReference type="InterPro" id="IPR001912">
    <property type="entry name" value="Ribosomal_uS4_N"/>
</dbReference>
<dbReference type="InterPro" id="IPR002942">
    <property type="entry name" value="S4_RNA-bd"/>
</dbReference>
<dbReference type="InterPro" id="IPR036986">
    <property type="entry name" value="S4_RNA-bd_sf"/>
</dbReference>
<dbReference type="NCBIfam" id="NF003717">
    <property type="entry name" value="PRK05327.1"/>
    <property type="match status" value="1"/>
</dbReference>
<dbReference type="NCBIfam" id="TIGR01017">
    <property type="entry name" value="rpsD_bact"/>
    <property type="match status" value="1"/>
</dbReference>
<dbReference type="PANTHER" id="PTHR11831">
    <property type="entry name" value="30S 40S RIBOSOMAL PROTEIN"/>
    <property type="match status" value="1"/>
</dbReference>
<dbReference type="PANTHER" id="PTHR11831:SF4">
    <property type="entry name" value="SMALL RIBOSOMAL SUBUNIT PROTEIN US4M"/>
    <property type="match status" value="1"/>
</dbReference>
<dbReference type="Pfam" id="PF00163">
    <property type="entry name" value="Ribosomal_S4"/>
    <property type="match status" value="1"/>
</dbReference>
<dbReference type="Pfam" id="PF01479">
    <property type="entry name" value="S4"/>
    <property type="match status" value="1"/>
</dbReference>
<dbReference type="SMART" id="SM01390">
    <property type="entry name" value="Ribosomal_S4"/>
    <property type="match status" value="1"/>
</dbReference>
<dbReference type="SMART" id="SM00363">
    <property type="entry name" value="S4"/>
    <property type="match status" value="1"/>
</dbReference>
<dbReference type="SUPFAM" id="SSF55174">
    <property type="entry name" value="Alpha-L RNA-binding motif"/>
    <property type="match status" value="1"/>
</dbReference>
<dbReference type="PROSITE" id="PS00632">
    <property type="entry name" value="RIBOSOMAL_S4"/>
    <property type="match status" value="1"/>
</dbReference>
<dbReference type="PROSITE" id="PS50889">
    <property type="entry name" value="S4"/>
    <property type="match status" value="1"/>
</dbReference>
<gene>
    <name type="primary">rps4</name>
</gene>
<proteinExistence type="inferred from homology"/>
<protein>
    <recommendedName>
        <fullName evidence="2">Small ribosomal subunit protein uS4c</fullName>
    </recommendedName>
    <alternativeName>
        <fullName>30S ribosomal protein S4, chloroplastic</fullName>
    </alternativeName>
</protein>
<evidence type="ECO:0000250" key="1"/>
<evidence type="ECO:0000305" key="2"/>
<feature type="chain" id="PRO_0000277007" description="Small ribosomal subunit protein uS4c">
    <location>
        <begin position="1"/>
        <end position="201"/>
    </location>
</feature>
<feature type="domain" description="S4 RNA-binding">
    <location>
        <begin position="89"/>
        <end position="149"/>
    </location>
</feature>
<sequence length="201" mass="23296">MSRYRGPRFKKIRRLGALPGLTNKKPRAGNDLRNQLRSGKKSQYRIRLEEKQKLRFHYGLTERQLLKYVRIAGKAKGSTGQVLLQLLEMRLDNILFRLGMASTIPAARQLVNHRHILVNGRIVDIPSYRCKPRDIITGKDEQKSRALIQKSLDSSPQEELPSHLTLHPFQYKGLVNQIIDSKWVGLKINELLVVEYYSRQT</sequence>
<keyword id="KW-0150">Chloroplast</keyword>
<keyword id="KW-0934">Plastid</keyword>
<keyword id="KW-1185">Reference proteome</keyword>
<keyword id="KW-0687">Ribonucleoprotein</keyword>
<keyword id="KW-0689">Ribosomal protein</keyword>
<keyword id="KW-0694">RNA-binding</keyword>
<keyword id="KW-0699">rRNA-binding</keyword>
<comment type="function">
    <text evidence="1">One of the primary rRNA binding proteins, it binds directly to 16S rRNA where it nucleates assembly of the body of the 30S subunit.</text>
</comment>
<comment type="function">
    <text evidence="1">With S5 and S12 plays an important role in translational accuracy.</text>
</comment>
<comment type="subunit">
    <text evidence="1">Part of the 30S ribosomal subunit. Contacts protein S5. The interaction surface between S4 and S5 is involved in control of translational fidelity (By similarity).</text>
</comment>
<comment type="subcellular location">
    <subcellularLocation>
        <location>Plastid</location>
        <location>Chloroplast</location>
    </subcellularLocation>
</comment>
<comment type="similarity">
    <text evidence="2">Belongs to the universal ribosomal protein uS4 family.</text>
</comment>
<accession>A0A337</accession>